<reference key="1">
    <citation type="submission" date="2000-03" db="EMBL/GenBank/DDBJ databases">
        <title>Toward understanding the rifamycin-resistance mechanism: DNA-dependent RNA polymerase beta-subunit activity in Amycolatopsis mediterranei S699.</title>
        <authorList>
            <person name="Pogosova-Agadjanyan E.L."/>
            <person name="Floss H.G."/>
            <person name="Yu T."/>
        </authorList>
    </citation>
    <scope>NUCLEOTIDE SEQUENCE [GENOMIC DNA]</scope>
    <source>
        <strain>S699</strain>
    </source>
</reference>
<reference key="2">
    <citation type="journal article" date="2011" name="J. Bacteriol.">
        <title>Whole genome sequence of the rifamycin B-producing strain Amycolatopsis mediterranei S699.</title>
        <authorList>
            <person name="Verma M."/>
            <person name="Kaur J."/>
            <person name="Kumar M."/>
            <person name="Kumari K."/>
            <person name="Saxena A."/>
            <person name="Anand S."/>
            <person name="Nigam A."/>
            <person name="Ravi V."/>
            <person name="Raghuvanshi S."/>
            <person name="Khurana P."/>
            <person name="Tyagi A.K."/>
            <person name="Khurana J.P."/>
            <person name="Lal R."/>
        </authorList>
    </citation>
    <scope>NUCLEOTIDE SEQUENCE [LARGE SCALE GENOMIC DNA]</scope>
    <source>
        <strain>S699</strain>
    </source>
</reference>
<reference key="3">
    <citation type="journal article" date="2012" name="J. Bacteriol.">
        <title>Complete genome sequence of Amycolatopsis mediterranei S699 based on de novo assembly via a combinatorial sequencing strategy.</title>
        <authorList>
            <person name="Tang B."/>
            <person name="Zhao W."/>
            <person name="Zheng H."/>
            <person name="Zhuo Y."/>
            <person name="Zhang L."/>
            <person name="Zhao G.P."/>
        </authorList>
    </citation>
    <scope>NUCLEOTIDE SEQUENCE [LARGE SCALE GENOMIC DNA]</scope>
    <source>
        <strain>S699</strain>
    </source>
</reference>
<name>RPOB_AMYMS</name>
<organism>
    <name type="scientific">Amycolatopsis mediterranei (strain S699)</name>
    <name type="common">Nocardia mediterranei</name>
    <dbReference type="NCBI Taxonomy" id="713604"/>
    <lineage>
        <taxon>Bacteria</taxon>
        <taxon>Bacillati</taxon>
        <taxon>Actinomycetota</taxon>
        <taxon>Actinomycetes</taxon>
        <taxon>Pseudonocardiales</taxon>
        <taxon>Pseudonocardiaceae</taxon>
        <taxon>Amycolatopsis</taxon>
    </lineage>
</organism>
<keyword id="KW-0240">DNA-directed RNA polymerase</keyword>
<keyword id="KW-0548">Nucleotidyltransferase</keyword>
<keyword id="KW-0804">Transcription</keyword>
<keyword id="KW-0808">Transferase</keyword>
<accession>Q9L637</accession>
<accession>G0FUS6</accession>
<protein>
    <recommendedName>
        <fullName evidence="1">DNA-directed RNA polymerase subunit beta</fullName>
        <shortName evidence="1">RNAP subunit beta</shortName>
        <ecNumber evidence="1">2.7.7.6</ecNumber>
    </recommendedName>
    <alternativeName>
        <fullName evidence="1">RNA polymerase subunit beta</fullName>
    </alternativeName>
    <alternativeName>
        <fullName evidence="1">Transcriptase subunit beta</fullName>
    </alternativeName>
</protein>
<dbReference type="EC" id="2.7.7.6" evidence="1"/>
<dbReference type="EMBL" id="AF242549">
    <property type="protein sequence ID" value="AAF60349.1"/>
    <property type="molecule type" value="Genomic_DNA"/>
</dbReference>
<dbReference type="EMBL" id="CP002896">
    <property type="protein sequence ID" value="AEK39162.1"/>
    <property type="molecule type" value="Genomic_DNA"/>
</dbReference>
<dbReference type="EMBL" id="CP003729">
    <property type="protein sequence ID" value="AFO74190.1"/>
    <property type="molecule type" value="Genomic_DNA"/>
</dbReference>
<dbReference type="RefSeq" id="WP_014466582.1">
    <property type="nucleotide sequence ID" value="NC_018266.1"/>
</dbReference>
<dbReference type="SMR" id="Q9L637"/>
<dbReference type="STRING" id="713604.RAM_03350"/>
<dbReference type="GeneID" id="92868458"/>
<dbReference type="KEGG" id="amm:AMES_0654"/>
<dbReference type="KEGG" id="amn:RAM_03350"/>
<dbReference type="PATRIC" id="fig|713604.12.peg.695"/>
<dbReference type="HOGENOM" id="CLU_000524_4_3_11"/>
<dbReference type="Proteomes" id="UP000006138">
    <property type="component" value="Chromosome"/>
</dbReference>
<dbReference type="GO" id="GO:0000428">
    <property type="term" value="C:DNA-directed RNA polymerase complex"/>
    <property type="evidence" value="ECO:0007669"/>
    <property type="project" value="UniProtKB-KW"/>
</dbReference>
<dbReference type="GO" id="GO:0003677">
    <property type="term" value="F:DNA binding"/>
    <property type="evidence" value="ECO:0007669"/>
    <property type="project" value="UniProtKB-UniRule"/>
</dbReference>
<dbReference type="GO" id="GO:0003899">
    <property type="term" value="F:DNA-directed RNA polymerase activity"/>
    <property type="evidence" value="ECO:0007669"/>
    <property type="project" value="UniProtKB-UniRule"/>
</dbReference>
<dbReference type="GO" id="GO:0032549">
    <property type="term" value="F:ribonucleoside binding"/>
    <property type="evidence" value="ECO:0007669"/>
    <property type="project" value="InterPro"/>
</dbReference>
<dbReference type="GO" id="GO:0006351">
    <property type="term" value="P:DNA-templated transcription"/>
    <property type="evidence" value="ECO:0007669"/>
    <property type="project" value="UniProtKB-UniRule"/>
</dbReference>
<dbReference type="CDD" id="cd00653">
    <property type="entry name" value="RNA_pol_B_RPB2"/>
    <property type="match status" value="1"/>
</dbReference>
<dbReference type="FunFam" id="3.90.1800.10:FF:000005">
    <property type="entry name" value="DNA-directed RNA polymerase subunit beta"/>
    <property type="match status" value="1"/>
</dbReference>
<dbReference type="Gene3D" id="2.40.50.100">
    <property type="match status" value="1"/>
</dbReference>
<dbReference type="Gene3D" id="2.40.50.150">
    <property type="match status" value="1"/>
</dbReference>
<dbReference type="Gene3D" id="3.90.1100.10">
    <property type="match status" value="1"/>
</dbReference>
<dbReference type="Gene3D" id="2.30.150.10">
    <property type="entry name" value="DNA-directed RNA polymerase, beta subunit, external 1 domain"/>
    <property type="match status" value="1"/>
</dbReference>
<dbReference type="Gene3D" id="2.40.270.10">
    <property type="entry name" value="DNA-directed RNA polymerase, subunit 2, domain 6"/>
    <property type="match status" value="1"/>
</dbReference>
<dbReference type="Gene3D" id="3.90.1800.10">
    <property type="entry name" value="RNA polymerase alpha subunit dimerisation domain"/>
    <property type="match status" value="1"/>
</dbReference>
<dbReference type="Gene3D" id="3.90.1110.10">
    <property type="entry name" value="RNA polymerase Rpb2, domain 2"/>
    <property type="match status" value="1"/>
</dbReference>
<dbReference type="HAMAP" id="MF_01321">
    <property type="entry name" value="RNApol_bact_RpoB"/>
    <property type="match status" value="1"/>
</dbReference>
<dbReference type="InterPro" id="IPR042107">
    <property type="entry name" value="DNA-dir_RNA_pol_bsu_ext_1_sf"/>
</dbReference>
<dbReference type="InterPro" id="IPR019462">
    <property type="entry name" value="DNA-dir_RNA_pol_bsu_external_1"/>
</dbReference>
<dbReference type="InterPro" id="IPR015712">
    <property type="entry name" value="DNA-dir_RNA_pol_su2"/>
</dbReference>
<dbReference type="InterPro" id="IPR007120">
    <property type="entry name" value="DNA-dir_RNAP_su2_dom"/>
</dbReference>
<dbReference type="InterPro" id="IPR037033">
    <property type="entry name" value="DNA-dir_RNAP_su2_hyb_sf"/>
</dbReference>
<dbReference type="InterPro" id="IPR010243">
    <property type="entry name" value="RNA_pol_bsu_bac"/>
</dbReference>
<dbReference type="InterPro" id="IPR007121">
    <property type="entry name" value="RNA_pol_bsu_CS"/>
</dbReference>
<dbReference type="InterPro" id="IPR007644">
    <property type="entry name" value="RNA_pol_bsu_protrusion"/>
</dbReference>
<dbReference type="InterPro" id="IPR007642">
    <property type="entry name" value="RNA_pol_Rpb2_2"/>
</dbReference>
<dbReference type="InterPro" id="IPR037034">
    <property type="entry name" value="RNA_pol_Rpb2_2_sf"/>
</dbReference>
<dbReference type="InterPro" id="IPR007645">
    <property type="entry name" value="RNA_pol_Rpb2_3"/>
</dbReference>
<dbReference type="InterPro" id="IPR007641">
    <property type="entry name" value="RNA_pol_Rpb2_7"/>
</dbReference>
<dbReference type="InterPro" id="IPR014724">
    <property type="entry name" value="RNA_pol_RPB2_OB-fold"/>
</dbReference>
<dbReference type="NCBIfam" id="NF001616">
    <property type="entry name" value="PRK00405.1"/>
    <property type="match status" value="1"/>
</dbReference>
<dbReference type="NCBIfam" id="TIGR02013">
    <property type="entry name" value="rpoB"/>
    <property type="match status" value="1"/>
</dbReference>
<dbReference type="PANTHER" id="PTHR20856">
    <property type="entry name" value="DNA-DIRECTED RNA POLYMERASE I SUBUNIT 2"/>
    <property type="match status" value="1"/>
</dbReference>
<dbReference type="Pfam" id="PF04563">
    <property type="entry name" value="RNA_pol_Rpb2_1"/>
    <property type="match status" value="1"/>
</dbReference>
<dbReference type="Pfam" id="PF04561">
    <property type="entry name" value="RNA_pol_Rpb2_2"/>
    <property type="match status" value="1"/>
</dbReference>
<dbReference type="Pfam" id="PF04565">
    <property type="entry name" value="RNA_pol_Rpb2_3"/>
    <property type="match status" value="1"/>
</dbReference>
<dbReference type="Pfam" id="PF10385">
    <property type="entry name" value="RNA_pol_Rpb2_45"/>
    <property type="match status" value="1"/>
</dbReference>
<dbReference type="Pfam" id="PF00562">
    <property type="entry name" value="RNA_pol_Rpb2_6"/>
    <property type="match status" value="1"/>
</dbReference>
<dbReference type="Pfam" id="PF04560">
    <property type="entry name" value="RNA_pol_Rpb2_7"/>
    <property type="match status" value="1"/>
</dbReference>
<dbReference type="SUPFAM" id="SSF64484">
    <property type="entry name" value="beta and beta-prime subunits of DNA dependent RNA-polymerase"/>
    <property type="match status" value="1"/>
</dbReference>
<dbReference type="PROSITE" id="PS01166">
    <property type="entry name" value="RNA_POL_BETA"/>
    <property type="match status" value="1"/>
</dbReference>
<sequence length="1167" mass="129354">MAVSPANQATAATTSAESRSEATGIPGAPKRVSFAKIREPLNTPNLLDVQIQSFQWFTGDEAWFQRRVEEGEENPVGGLEEVLNEISPIEDFSGSMSLSFSAPRFDEVKASIEECKDKDMTYAAPLFVTAEFVNNNTGEIKSQTVFLGDFPVMTDKGTFVINGTERVVVSQLVRSPGVYYSKDIDKTSDKDVFSVRVIPSRGAWLEFDVDKRDTVGVRIDRKRRQPVTVLLKALGWTTEAIRERFSFSETLLATLEKDHTAGTDEALLDIYRKLRPGEPPTKESAQTLLENLFFKAKRYDLAKVGRYKVNKKLGLSTPIENGTLTEEDIVTIIEYLVRLHAGEDKMTAANNTEIPVETDDIDHFGNRRIRTVGELIQNQIRVGLSRTERVVRERMTTQDVEAITPQTLINIRPIGAAIKEFFGTSQLSQFMQQTNPIDGLTHKRRLNALGPGGLSRERAGMEVRDVHPSHYGRMCPIETPEGPNIGLIGSLCSYARVNPFGFIETPYRKVVEGRVTDQIDYLTADEEDRFVKAQANAPISDDGTFIEDRVMARRKGGEVELIDPLDIDYMDVSPRQMVSIATAMIPFLEHDDANRALMGANMQRQAVPLLRSQAPYVGTGVELRAAIDSGDMLVAEQSGVVEELSADLITVMHDDGTRKSYSLYKFRRSNHGTCFNHRPIVNEGDRIEAGQVIADGPSTENGEVALGKNLLVAVMPWEGHNYEDAIILSERLVQDDVLTSIHIEEHEIDARDTKLGAEEITRDIPNVSEEVLADLDERGIIRIGAEVRDGDILVGKVTPKGETELTPEERLLRAIFGEKAREVRDTSLKVPHGETGKVIGIRVFSREDDDELPPGVNELVRVYVAQKRKIQPGDKLAGRHGNKGVIGKILPVEDMPFMEDGTPVDIILNTHGVPRRMNIGQILELHLGWLASQGWTIEGDPDWAKNLSAELRDVAPGTNTATPVFDGAKEEELTGLLSATKPNRDGERMVKENGKANLFDGRSGEPYPYPVAVGYMYILKLHHLVDDKIHARSTGPYSMITQQPLGGKAQFGGQRFGEMECWAMQAYGAAYTLQELLTIKSDDVVGRVKVYEAIVKGENIPEPGIPESFKVLLKELQSLCLNVEVLSSDGSSIEMRDSDDEDLERAAANLGINLSRNESPSVDDVVH</sequence>
<proteinExistence type="inferred from homology"/>
<gene>
    <name evidence="1" type="primary">rpoB</name>
    <name type="ordered locus">RAM_03350</name>
    <name type="ordered locus">AMES_0654</name>
</gene>
<comment type="function">
    <text evidence="1">DNA-dependent RNA polymerase catalyzes the transcription of DNA into RNA using the four ribonucleoside triphosphates as substrates.</text>
</comment>
<comment type="catalytic activity">
    <reaction evidence="1">
        <text>RNA(n) + a ribonucleoside 5'-triphosphate = RNA(n+1) + diphosphate</text>
        <dbReference type="Rhea" id="RHEA:21248"/>
        <dbReference type="Rhea" id="RHEA-COMP:14527"/>
        <dbReference type="Rhea" id="RHEA-COMP:17342"/>
        <dbReference type="ChEBI" id="CHEBI:33019"/>
        <dbReference type="ChEBI" id="CHEBI:61557"/>
        <dbReference type="ChEBI" id="CHEBI:140395"/>
        <dbReference type="EC" id="2.7.7.6"/>
    </reaction>
</comment>
<comment type="subunit">
    <text evidence="1">The RNAP catalytic core consists of 2 alpha, 1 beta, 1 beta' and 1 omega subunit. When a sigma factor is associated with the core the holoenzyme is formed, which can initiate transcription.</text>
</comment>
<comment type="similarity">
    <text evidence="1">Belongs to the RNA polymerase beta chain family.</text>
</comment>
<feature type="chain" id="PRO_0000047851" description="DNA-directed RNA polymerase subunit beta">
    <location>
        <begin position="1"/>
        <end position="1167"/>
    </location>
</feature>
<feature type="region of interest" description="Disordered" evidence="2">
    <location>
        <begin position="1"/>
        <end position="27"/>
    </location>
</feature>
<feature type="compositionally biased region" description="Low complexity" evidence="2">
    <location>
        <begin position="9"/>
        <end position="23"/>
    </location>
</feature>
<feature type="sequence conflict" description="In Ref. 1; AAF60349." evidence="3" ref="1">
    <original>D</original>
    <variation>G</variation>
    <location>
        <position position="1139"/>
    </location>
</feature>
<evidence type="ECO:0000255" key="1">
    <source>
        <dbReference type="HAMAP-Rule" id="MF_01321"/>
    </source>
</evidence>
<evidence type="ECO:0000256" key="2">
    <source>
        <dbReference type="SAM" id="MobiDB-lite"/>
    </source>
</evidence>
<evidence type="ECO:0000305" key="3"/>